<name>TEG1_HHV2H</name>
<protein>
    <recommendedName>
        <fullName>Tegument protein UL46</fullName>
    </recommendedName>
    <alternativeName>
        <fullName>Tegument protein VP11/12</fullName>
    </alternativeName>
</protein>
<comment type="function">
    <text evidence="1">Plays a role in the activation of the host PI3K/AKT pathway to promote cell survival. Interacts with and activates host LCK and thereby recruits downstream partners SHC1, GRB2 and PI3KR1 in order to activate the PI3K pathway by phosphorylating host AKT on its activating residues. This mechanism is inhibited by the viral protein US3 that instead promotes incorporation of UL46 into virions.</text>
</comment>
<comment type="subunit">
    <text evidence="1 3">Interacts with VP16. Interacts with host LCK, PIK3R1, SHC1 AND GRB2; these interactions promote the activation of the PI3K/AKT pathway. Interacts with host YWHAB. Interacts with ICP0; this interaction targets UL46 for degradation by the proteasome.</text>
</comment>
<comment type="subcellular location">
    <subcellularLocation>
        <location evidence="1">Virion tegument</location>
    </subcellularLocation>
    <subcellularLocation>
        <location evidence="1">Host cell membrane</location>
        <topology evidence="1">Peripheral membrane protein</topology>
    </subcellularLocation>
</comment>
<comment type="PTM">
    <text evidence="1">Phosphorylated by host LCK. The phosphorylation seems to be lymphocyte-specific.</text>
</comment>
<comment type="similarity">
    <text evidence="4">Belongs to the herpesviridae HHV-1 VP11/12 protein family.</text>
</comment>
<accession>P89466</accession>
<organismHost>
    <name type="scientific">Homo sapiens</name>
    <name type="common">Human</name>
    <dbReference type="NCBI Taxonomy" id="9606"/>
</organismHost>
<feature type="chain" id="PRO_0000385462" description="Tegument protein UL46">
    <location>
        <begin position="1"/>
        <end position="722"/>
    </location>
</feature>
<feature type="region of interest" description="Disordered" evidence="2">
    <location>
        <begin position="423"/>
        <end position="534"/>
    </location>
</feature>
<feature type="compositionally biased region" description="Basic and acidic residues" evidence="2">
    <location>
        <begin position="440"/>
        <end position="451"/>
    </location>
</feature>
<feature type="compositionally biased region" description="Basic and acidic residues" evidence="2">
    <location>
        <begin position="474"/>
        <end position="491"/>
    </location>
</feature>
<feature type="compositionally biased region" description="Pro residues" evidence="2">
    <location>
        <begin position="510"/>
        <end position="522"/>
    </location>
</feature>
<feature type="compositionally biased region" description="Low complexity" evidence="2">
    <location>
        <begin position="523"/>
        <end position="534"/>
    </location>
</feature>
<sequence length="722" mass="77709">MQRRARGASSLRLARCLTPANLIRGANAGVPERRIFAGCLLPTPEGLLSAAVGVLRQRADDLQPAFLTGADRSVRLAARHHNTVPESLIVDGLASDPHYDYIRHYASAAKQALGEVELSGGQLSRAILAQYWKYLQTVVPSGLDIPDDPAGDCDPSLHVLLRPTLLPKLLVRAPFKSGAAAAKYAAAVAGLRDAAHRLQQYMFFMRPADPSRPSTDTALRLSELLAYVSVLYHWASWMLWTADKYVCRRLGPADRRFVALSGSLEAPAETFARHLDRGPSGTTGSMQCMALRAAVSDVLGHLTRLAHLWETGKRSGGTYGIVDAIVSTVEVLSIVHHHAQYIINATLTGYVVWASDSLNNEYLTAAVDSQERFCRTAAPLFPTMTAPSWARMELSIKSWFGAALAPDLLRSGTPSPHYESILRLAASGPPGGRGAVGGSCRDKIQRTRRDNAPPPLPRARPHSTPAAPRRCRRHREDLPEPPHVDAADRGPEPCAGRPATYYTHMAGAPPRLPPRNPAPPEQRPAAAARPLAAQREAAGVYDAVRTWGPDAEAEPDQMENTYLLPDDDAAMPAGVGLGATPAADTTAAAAWPAESHAPRAPSEDADSIYESVGEDGGRVYEEIPWVRVYENICPRRRLAGGAALPGDAPDSPYIEAENPLYDWGGSALFSPRRATRAPDPGLSLSPMPARPRTNALANDGPTNVAALSALLTKLKRGRHQSH</sequence>
<reference key="1">
    <citation type="journal article" date="1998" name="J. Virol.">
        <title>The genome sequence of herpes simplex virus type 2.</title>
        <authorList>
            <person name="Dolan A."/>
            <person name="Jamieson F.E."/>
            <person name="Cunningham C."/>
            <person name="Barnett B.C."/>
            <person name="McGeoch D.J."/>
        </authorList>
    </citation>
    <scope>NUCLEOTIDE SEQUENCE [LARGE SCALE GENOMIC DNA]</scope>
</reference>
<reference key="2">
    <citation type="journal article" date="2000" name="Arch. Virol.">
        <title>Synthesis, subcellular localization and VP16 interaction of the herpes simplex virus type 2 UL46 gene product.</title>
        <authorList>
            <person name="Kato K."/>
            <person name="Daikoku T."/>
            <person name="Goshima F."/>
            <person name="Kume H."/>
            <person name="Yamaki K."/>
            <person name="Nishiyama Y."/>
        </authorList>
    </citation>
    <scope>INTERACTION WITH VP16</scope>
    <source>
        <strain>186</strain>
    </source>
</reference>
<organism>
    <name type="scientific">Human herpesvirus 2 (strain HG52)</name>
    <name type="common">HHV-2</name>
    <name type="synonym">Human herpes simplex virus 2</name>
    <dbReference type="NCBI Taxonomy" id="10315"/>
    <lineage>
        <taxon>Viruses</taxon>
        <taxon>Duplodnaviria</taxon>
        <taxon>Heunggongvirae</taxon>
        <taxon>Peploviricota</taxon>
        <taxon>Herviviricetes</taxon>
        <taxon>Herpesvirales</taxon>
        <taxon>Orthoherpesviridae</taxon>
        <taxon>Alphaherpesvirinae</taxon>
        <taxon>Simplexvirus</taxon>
        <taxon>Simplexvirus humanalpha2</taxon>
        <taxon>Human herpesvirus 2</taxon>
    </lineage>
</organism>
<dbReference type="EMBL" id="Z86099">
    <property type="protein sequence ID" value="CAB06732.1"/>
    <property type="molecule type" value="Genomic_DNA"/>
</dbReference>
<dbReference type="Proteomes" id="UP000001874">
    <property type="component" value="Segment"/>
</dbReference>
<dbReference type="GO" id="GO:0020002">
    <property type="term" value="C:host cell plasma membrane"/>
    <property type="evidence" value="ECO:0007669"/>
    <property type="project" value="UniProtKB-SubCell"/>
</dbReference>
<dbReference type="GO" id="GO:0016020">
    <property type="term" value="C:membrane"/>
    <property type="evidence" value="ECO:0007669"/>
    <property type="project" value="UniProtKB-KW"/>
</dbReference>
<dbReference type="GO" id="GO:0019033">
    <property type="term" value="C:viral tegument"/>
    <property type="evidence" value="ECO:0007669"/>
    <property type="project" value="UniProtKB-SubCell"/>
</dbReference>
<dbReference type="GO" id="GO:0006355">
    <property type="term" value="P:regulation of DNA-templated transcription"/>
    <property type="evidence" value="ECO:0007669"/>
    <property type="project" value="InterPro"/>
</dbReference>
<dbReference type="InterPro" id="IPR005051">
    <property type="entry name" value="Herpes_UL46"/>
</dbReference>
<dbReference type="Pfam" id="PF03387">
    <property type="entry name" value="Herpes_UL46"/>
    <property type="match status" value="1"/>
</dbReference>
<evidence type="ECO:0000250" key="1">
    <source>
        <dbReference type="UniProtKB" id="P10230"/>
    </source>
</evidence>
<evidence type="ECO:0000256" key="2">
    <source>
        <dbReference type="SAM" id="MobiDB-lite"/>
    </source>
</evidence>
<evidence type="ECO:0000269" key="3">
    <source>
    </source>
</evidence>
<evidence type="ECO:0000305" key="4"/>
<keyword id="KW-0010">Activator</keyword>
<keyword id="KW-1032">Host cell membrane</keyword>
<keyword id="KW-1043">Host membrane</keyword>
<keyword id="KW-0472">Membrane</keyword>
<keyword id="KW-1185">Reference proteome</keyword>
<keyword id="KW-0804">Transcription</keyword>
<keyword id="KW-0805">Transcription regulation</keyword>
<keyword id="KW-0946">Virion</keyword>
<keyword id="KW-0920">Virion tegument</keyword>
<proteinExistence type="evidence at protein level"/>
<gene>
    <name type="ORF">UL46</name>
</gene>